<keyword id="KW-0028">Amino-acid biosynthesis</keyword>
<keyword id="KW-0963">Cytoplasm</keyword>
<keyword id="KW-0413">Isomerase</keyword>
<keyword id="KW-0457">Lysine biosynthesis</keyword>
<keyword id="KW-1185">Reference proteome</keyword>
<comment type="function">
    <text evidence="1">Catalyzes the stereoinversion of LL-2,6-diaminopimelate (L,L-DAP) to meso-diaminopimelate (meso-DAP), a precursor of L-lysine and an essential component of the bacterial peptidoglycan.</text>
</comment>
<comment type="catalytic activity">
    <reaction evidence="1">
        <text>(2S,6S)-2,6-diaminopimelate = meso-2,6-diaminopimelate</text>
        <dbReference type="Rhea" id="RHEA:15393"/>
        <dbReference type="ChEBI" id="CHEBI:57609"/>
        <dbReference type="ChEBI" id="CHEBI:57791"/>
        <dbReference type="EC" id="5.1.1.7"/>
    </reaction>
</comment>
<comment type="pathway">
    <text evidence="1">Amino-acid biosynthesis; L-lysine biosynthesis via DAP pathway; DL-2,6-diaminopimelate from LL-2,6-diaminopimelate: step 1/1.</text>
</comment>
<comment type="subunit">
    <text evidence="1">Homodimer.</text>
</comment>
<comment type="subcellular location">
    <subcellularLocation>
        <location evidence="1">Cytoplasm</location>
    </subcellularLocation>
</comment>
<comment type="similarity">
    <text evidence="1">Belongs to the diaminopimelate epimerase family.</text>
</comment>
<evidence type="ECO:0000255" key="1">
    <source>
        <dbReference type="HAMAP-Rule" id="MF_00197"/>
    </source>
</evidence>
<proteinExistence type="inferred from homology"/>
<protein>
    <recommendedName>
        <fullName evidence="1">Diaminopimelate epimerase</fullName>
        <shortName evidence="1">DAP epimerase</shortName>
        <ecNumber evidence="1">5.1.1.7</ecNumber>
    </recommendedName>
    <alternativeName>
        <fullName evidence="1">PLP-independent amino acid racemase</fullName>
    </alternativeName>
</protein>
<accession>Q2Y5Z0</accession>
<sequence>MKLKFTKMHGLGNDFIVIDAVNQQISLSPEQLRRLADRHLGVGCDQILLIEKAEGDADFRYRIFNADGGEVEQCGNGARCFVRYVHDHGMTDKQQVRIETLSGVVIPELEADGEVTVNMGVPKFDPVEIPFIAEQRAPTYSLSLDDRQVEISSVSMGNPHAVQVVSDLDNAPVLTEGPVIEKHSRFPQRVNAGYMQVVDPHHIRLRVYERGAGETLACGTGACAAAVAGIQRGLLESPVRVSFSTGDLFIRWEGENQPVWMTGPAVAVFDGEIELQF</sequence>
<dbReference type="EC" id="5.1.1.7" evidence="1"/>
<dbReference type="EMBL" id="CP000103">
    <property type="protein sequence ID" value="ABB75831.1"/>
    <property type="molecule type" value="Genomic_DNA"/>
</dbReference>
<dbReference type="RefSeq" id="WP_011381830.1">
    <property type="nucleotide sequence ID" value="NC_007614.1"/>
</dbReference>
<dbReference type="SMR" id="Q2Y5Z0"/>
<dbReference type="STRING" id="323848.Nmul_A2542"/>
<dbReference type="KEGG" id="nmu:Nmul_A2542"/>
<dbReference type="eggNOG" id="COG0253">
    <property type="taxonomic scope" value="Bacteria"/>
</dbReference>
<dbReference type="HOGENOM" id="CLU_053306_1_1_4"/>
<dbReference type="OrthoDB" id="9805408at2"/>
<dbReference type="UniPathway" id="UPA00034">
    <property type="reaction ID" value="UER00025"/>
</dbReference>
<dbReference type="Proteomes" id="UP000002718">
    <property type="component" value="Chromosome"/>
</dbReference>
<dbReference type="GO" id="GO:0005829">
    <property type="term" value="C:cytosol"/>
    <property type="evidence" value="ECO:0007669"/>
    <property type="project" value="TreeGrafter"/>
</dbReference>
<dbReference type="GO" id="GO:0008837">
    <property type="term" value="F:diaminopimelate epimerase activity"/>
    <property type="evidence" value="ECO:0007669"/>
    <property type="project" value="UniProtKB-UniRule"/>
</dbReference>
<dbReference type="GO" id="GO:0009089">
    <property type="term" value="P:lysine biosynthetic process via diaminopimelate"/>
    <property type="evidence" value="ECO:0007669"/>
    <property type="project" value="UniProtKB-UniRule"/>
</dbReference>
<dbReference type="FunFam" id="3.10.310.10:FF:000001">
    <property type="entry name" value="Diaminopimelate epimerase"/>
    <property type="match status" value="1"/>
</dbReference>
<dbReference type="Gene3D" id="3.10.310.10">
    <property type="entry name" value="Diaminopimelate Epimerase, Chain A, domain 1"/>
    <property type="match status" value="2"/>
</dbReference>
<dbReference type="HAMAP" id="MF_00197">
    <property type="entry name" value="DAP_epimerase"/>
    <property type="match status" value="1"/>
</dbReference>
<dbReference type="InterPro" id="IPR018510">
    <property type="entry name" value="DAP_epimerase_AS"/>
</dbReference>
<dbReference type="InterPro" id="IPR001653">
    <property type="entry name" value="DAP_epimerase_DapF"/>
</dbReference>
<dbReference type="NCBIfam" id="TIGR00652">
    <property type="entry name" value="DapF"/>
    <property type="match status" value="1"/>
</dbReference>
<dbReference type="PANTHER" id="PTHR31689:SF0">
    <property type="entry name" value="DIAMINOPIMELATE EPIMERASE"/>
    <property type="match status" value="1"/>
</dbReference>
<dbReference type="PANTHER" id="PTHR31689">
    <property type="entry name" value="DIAMINOPIMELATE EPIMERASE, CHLOROPLASTIC"/>
    <property type="match status" value="1"/>
</dbReference>
<dbReference type="Pfam" id="PF01678">
    <property type="entry name" value="DAP_epimerase"/>
    <property type="match status" value="2"/>
</dbReference>
<dbReference type="SUPFAM" id="SSF54506">
    <property type="entry name" value="Diaminopimelate epimerase-like"/>
    <property type="match status" value="1"/>
</dbReference>
<dbReference type="PROSITE" id="PS01326">
    <property type="entry name" value="DAP_EPIMERASE"/>
    <property type="match status" value="1"/>
</dbReference>
<reference key="1">
    <citation type="submission" date="2005-08" db="EMBL/GenBank/DDBJ databases">
        <title>Complete sequence of chromosome 1 of Nitrosospira multiformis ATCC 25196.</title>
        <authorList>
            <person name="Copeland A."/>
            <person name="Lucas S."/>
            <person name="Lapidus A."/>
            <person name="Barry K."/>
            <person name="Detter J.C."/>
            <person name="Glavina T."/>
            <person name="Hammon N."/>
            <person name="Israni S."/>
            <person name="Pitluck S."/>
            <person name="Chain P."/>
            <person name="Malfatti S."/>
            <person name="Shin M."/>
            <person name="Vergez L."/>
            <person name="Schmutz J."/>
            <person name="Larimer F."/>
            <person name="Land M."/>
            <person name="Hauser L."/>
            <person name="Kyrpides N."/>
            <person name="Lykidis A."/>
            <person name="Richardson P."/>
        </authorList>
    </citation>
    <scope>NUCLEOTIDE SEQUENCE [LARGE SCALE GENOMIC DNA]</scope>
    <source>
        <strain>ATCC 25196 / NCIMB 11849 / C 71</strain>
    </source>
</reference>
<name>DAPF_NITMU</name>
<organism>
    <name type="scientific">Nitrosospira multiformis (strain ATCC 25196 / NCIMB 11849 / C 71)</name>
    <dbReference type="NCBI Taxonomy" id="323848"/>
    <lineage>
        <taxon>Bacteria</taxon>
        <taxon>Pseudomonadati</taxon>
        <taxon>Pseudomonadota</taxon>
        <taxon>Betaproteobacteria</taxon>
        <taxon>Nitrosomonadales</taxon>
        <taxon>Nitrosomonadaceae</taxon>
        <taxon>Nitrosospira</taxon>
    </lineage>
</organism>
<gene>
    <name evidence="1" type="primary">dapF</name>
    <name type="ordered locus">Nmul_A2542</name>
</gene>
<feature type="chain" id="PRO_1000011918" description="Diaminopimelate epimerase">
    <location>
        <begin position="1"/>
        <end position="277"/>
    </location>
</feature>
<feature type="active site" description="Proton donor" evidence="1">
    <location>
        <position position="74"/>
    </location>
</feature>
<feature type="active site" description="Proton acceptor" evidence="1">
    <location>
        <position position="218"/>
    </location>
</feature>
<feature type="binding site" evidence="1">
    <location>
        <position position="13"/>
    </location>
    <ligand>
        <name>substrate</name>
    </ligand>
</feature>
<feature type="binding site" evidence="1">
    <location>
        <position position="46"/>
    </location>
    <ligand>
        <name>substrate</name>
    </ligand>
</feature>
<feature type="binding site" evidence="1">
    <location>
        <position position="65"/>
    </location>
    <ligand>
        <name>substrate</name>
    </ligand>
</feature>
<feature type="binding site" evidence="1">
    <location>
        <begin position="75"/>
        <end position="76"/>
    </location>
    <ligand>
        <name>substrate</name>
    </ligand>
</feature>
<feature type="binding site" evidence="1">
    <location>
        <position position="158"/>
    </location>
    <ligand>
        <name>substrate</name>
    </ligand>
</feature>
<feature type="binding site" evidence="1">
    <location>
        <position position="191"/>
    </location>
    <ligand>
        <name>substrate</name>
    </ligand>
</feature>
<feature type="binding site" evidence="1">
    <location>
        <begin position="209"/>
        <end position="210"/>
    </location>
    <ligand>
        <name>substrate</name>
    </ligand>
</feature>
<feature type="binding site" evidence="1">
    <location>
        <begin position="219"/>
        <end position="220"/>
    </location>
    <ligand>
        <name>substrate</name>
    </ligand>
</feature>
<feature type="site" description="Could be important to modulate the pK values of the two catalytic cysteine residues" evidence="1">
    <location>
        <position position="160"/>
    </location>
</feature>
<feature type="site" description="Could be important to modulate the pK values of the two catalytic cysteine residues" evidence="1">
    <location>
        <position position="209"/>
    </location>
</feature>